<feature type="signal peptide" evidence="3">
    <location>
        <begin position="1"/>
        <end position="21"/>
    </location>
</feature>
<feature type="chain" id="PRO_0000012305" description="Glypican-2">
    <location>
        <begin position="22"/>
        <end position="556"/>
    </location>
</feature>
<feature type="chain" id="PRO_0000333842" description="Secreted glypican-2">
    <location>
        <begin position="22"/>
        <end status="unknown"/>
    </location>
</feature>
<feature type="propeptide" id="PRO_0000012306" description="Removed in mature form" evidence="3">
    <location>
        <begin position="557"/>
        <end position="579"/>
    </location>
</feature>
<feature type="region of interest" description="Disordered" evidence="4">
    <location>
        <begin position="347"/>
        <end position="382"/>
    </location>
</feature>
<feature type="region of interest" description="Disordered" evidence="4">
    <location>
        <begin position="483"/>
        <end position="552"/>
    </location>
</feature>
<feature type="compositionally biased region" description="Basic and acidic residues" evidence="4">
    <location>
        <begin position="361"/>
        <end position="379"/>
    </location>
</feature>
<feature type="compositionally biased region" description="Pro residues" evidence="4">
    <location>
        <begin position="517"/>
        <end position="527"/>
    </location>
</feature>
<feature type="lipid moiety-binding region" description="GPI-anchor amidated serine" evidence="3">
    <location>
        <position position="556"/>
    </location>
</feature>
<feature type="glycosylation site" description="O-linked (Xyl...) (heparan sulfate) serine" evidence="3">
    <location>
        <position position="55"/>
    </location>
</feature>
<feature type="glycosylation site" description="O-linked (Xyl...) (heparan sulfate) serine" evidence="3">
    <location>
        <position position="92"/>
    </location>
</feature>
<feature type="glycosylation site" description="O-linked (Xyl...) (heparan sulfate) serine" evidence="3">
    <location>
        <position position="155"/>
    </location>
</feature>
<feature type="glycosylation site" description="O-linked (Xyl...) (heparan sulfate) serine" evidence="3">
    <location>
        <position position="498"/>
    </location>
</feature>
<feature type="glycosylation site" description="O-linked (Xyl...) (heparan sulfate) serine" evidence="3">
    <location>
        <position position="500"/>
    </location>
</feature>
<gene>
    <name type="primary">Gpc2</name>
</gene>
<reference key="1">
    <citation type="journal article" date="2005" name="Science">
        <title>The transcriptional landscape of the mammalian genome.</title>
        <authorList>
            <person name="Carninci P."/>
            <person name="Kasukawa T."/>
            <person name="Katayama S."/>
            <person name="Gough J."/>
            <person name="Frith M.C."/>
            <person name="Maeda N."/>
            <person name="Oyama R."/>
            <person name="Ravasi T."/>
            <person name="Lenhard B."/>
            <person name="Wells C."/>
            <person name="Kodzius R."/>
            <person name="Shimokawa K."/>
            <person name="Bajic V.B."/>
            <person name="Brenner S.E."/>
            <person name="Batalov S."/>
            <person name="Forrest A.R."/>
            <person name="Zavolan M."/>
            <person name="Davis M.J."/>
            <person name="Wilming L.G."/>
            <person name="Aidinis V."/>
            <person name="Allen J.E."/>
            <person name="Ambesi-Impiombato A."/>
            <person name="Apweiler R."/>
            <person name="Aturaliya R.N."/>
            <person name="Bailey T.L."/>
            <person name="Bansal M."/>
            <person name="Baxter L."/>
            <person name="Beisel K.W."/>
            <person name="Bersano T."/>
            <person name="Bono H."/>
            <person name="Chalk A.M."/>
            <person name="Chiu K.P."/>
            <person name="Choudhary V."/>
            <person name="Christoffels A."/>
            <person name="Clutterbuck D.R."/>
            <person name="Crowe M.L."/>
            <person name="Dalla E."/>
            <person name="Dalrymple B.P."/>
            <person name="de Bono B."/>
            <person name="Della Gatta G."/>
            <person name="di Bernardo D."/>
            <person name="Down T."/>
            <person name="Engstrom P."/>
            <person name="Fagiolini M."/>
            <person name="Faulkner G."/>
            <person name="Fletcher C.F."/>
            <person name="Fukushima T."/>
            <person name="Furuno M."/>
            <person name="Futaki S."/>
            <person name="Gariboldi M."/>
            <person name="Georgii-Hemming P."/>
            <person name="Gingeras T.R."/>
            <person name="Gojobori T."/>
            <person name="Green R.E."/>
            <person name="Gustincich S."/>
            <person name="Harbers M."/>
            <person name="Hayashi Y."/>
            <person name="Hensch T.K."/>
            <person name="Hirokawa N."/>
            <person name="Hill D."/>
            <person name="Huminiecki L."/>
            <person name="Iacono M."/>
            <person name="Ikeo K."/>
            <person name="Iwama A."/>
            <person name="Ishikawa T."/>
            <person name="Jakt M."/>
            <person name="Kanapin A."/>
            <person name="Katoh M."/>
            <person name="Kawasawa Y."/>
            <person name="Kelso J."/>
            <person name="Kitamura H."/>
            <person name="Kitano H."/>
            <person name="Kollias G."/>
            <person name="Krishnan S.P."/>
            <person name="Kruger A."/>
            <person name="Kummerfeld S.K."/>
            <person name="Kurochkin I.V."/>
            <person name="Lareau L.F."/>
            <person name="Lazarevic D."/>
            <person name="Lipovich L."/>
            <person name="Liu J."/>
            <person name="Liuni S."/>
            <person name="McWilliam S."/>
            <person name="Madan Babu M."/>
            <person name="Madera M."/>
            <person name="Marchionni L."/>
            <person name="Matsuda H."/>
            <person name="Matsuzawa S."/>
            <person name="Miki H."/>
            <person name="Mignone F."/>
            <person name="Miyake S."/>
            <person name="Morris K."/>
            <person name="Mottagui-Tabar S."/>
            <person name="Mulder N."/>
            <person name="Nakano N."/>
            <person name="Nakauchi H."/>
            <person name="Ng P."/>
            <person name="Nilsson R."/>
            <person name="Nishiguchi S."/>
            <person name="Nishikawa S."/>
            <person name="Nori F."/>
            <person name="Ohara O."/>
            <person name="Okazaki Y."/>
            <person name="Orlando V."/>
            <person name="Pang K.C."/>
            <person name="Pavan W.J."/>
            <person name="Pavesi G."/>
            <person name="Pesole G."/>
            <person name="Petrovsky N."/>
            <person name="Piazza S."/>
            <person name="Reed J."/>
            <person name="Reid J.F."/>
            <person name="Ring B.Z."/>
            <person name="Ringwald M."/>
            <person name="Rost B."/>
            <person name="Ruan Y."/>
            <person name="Salzberg S.L."/>
            <person name="Sandelin A."/>
            <person name="Schneider C."/>
            <person name="Schoenbach C."/>
            <person name="Sekiguchi K."/>
            <person name="Semple C.A."/>
            <person name="Seno S."/>
            <person name="Sessa L."/>
            <person name="Sheng Y."/>
            <person name="Shibata Y."/>
            <person name="Shimada H."/>
            <person name="Shimada K."/>
            <person name="Silva D."/>
            <person name="Sinclair B."/>
            <person name="Sperling S."/>
            <person name="Stupka E."/>
            <person name="Sugiura K."/>
            <person name="Sultana R."/>
            <person name="Takenaka Y."/>
            <person name="Taki K."/>
            <person name="Tammoja K."/>
            <person name="Tan S.L."/>
            <person name="Tang S."/>
            <person name="Taylor M.S."/>
            <person name="Tegner J."/>
            <person name="Teichmann S.A."/>
            <person name="Ueda H.R."/>
            <person name="van Nimwegen E."/>
            <person name="Verardo R."/>
            <person name="Wei C.L."/>
            <person name="Yagi K."/>
            <person name="Yamanishi H."/>
            <person name="Zabarovsky E."/>
            <person name="Zhu S."/>
            <person name="Zimmer A."/>
            <person name="Hide W."/>
            <person name="Bult C."/>
            <person name="Grimmond S.M."/>
            <person name="Teasdale R.D."/>
            <person name="Liu E.T."/>
            <person name="Brusic V."/>
            <person name="Quackenbush J."/>
            <person name="Wahlestedt C."/>
            <person name="Mattick J.S."/>
            <person name="Hume D.A."/>
            <person name="Kai C."/>
            <person name="Sasaki D."/>
            <person name="Tomaru Y."/>
            <person name="Fukuda S."/>
            <person name="Kanamori-Katayama M."/>
            <person name="Suzuki M."/>
            <person name="Aoki J."/>
            <person name="Arakawa T."/>
            <person name="Iida J."/>
            <person name="Imamura K."/>
            <person name="Itoh M."/>
            <person name="Kato T."/>
            <person name="Kawaji H."/>
            <person name="Kawagashira N."/>
            <person name="Kawashima T."/>
            <person name="Kojima M."/>
            <person name="Kondo S."/>
            <person name="Konno H."/>
            <person name="Nakano K."/>
            <person name="Ninomiya N."/>
            <person name="Nishio T."/>
            <person name="Okada M."/>
            <person name="Plessy C."/>
            <person name="Shibata K."/>
            <person name="Shiraki T."/>
            <person name="Suzuki S."/>
            <person name="Tagami M."/>
            <person name="Waki K."/>
            <person name="Watahiki A."/>
            <person name="Okamura-Oho Y."/>
            <person name="Suzuki H."/>
            <person name="Kawai J."/>
            <person name="Hayashizaki Y."/>
        </authorList>
    </citation>
    <scope>NUCLEOTIDE SEQUENCE [LARGE SCALE MRNA]</scope>
    <source>
        <strain>C57BL/6J</strain>
        <tissue>Spinal cord</tissue>
    </source>
</reference>
<reference key="2">
    <citation type="journal article" date="2004" name="Genome Res.">
        <title>The status, quality, and expansion of the NIH full-length cDNA project: the Mammalian Gene Collection (MGC).</title>
        <authorList>
            <consortium name="The MGC Project Team"/>
        </authorList>
    </citation>
    <scope>NUCLEOTIDE SEQUENCE [LARGE SCALE MRNA]</scope>
    <source>
        <strain>C57BL/6J</strain>
        <tissue>Brain</tissue>
    </source>
</reference>
<keyword id="KW-1003">Cell membrane</keyword>
<keyword id="KW-0325">Glycoprotein</keyword>
<keyword id="KW-0336">GPI-anchor</keyword>
<keyword id="KW-0357">Heparan sulfate</keyword>
<keyword id="KW-0449">Lipoprotein</keyword>
<keyword id="KW-0472">Membrane</keyword>
<keyword id="KW-0654">Proteoglycan</keyword>
<keyword id="KW-1185">Reference proteome</keyword>
<keyword id="KW-0964">Secreted</keyword>
<keyword id="KW-0732">Signal</keyword>
<evidence type="ECO:0000250" key="1"/>
<evidence type="ECO:0000250" key="2">
    <source>
        <dbReference type="UniProtKB" id="P51653"/>
    </source>
</evidence>
<evidence type="ECO:0000255" key="3"/>
<evidence type="ECO:0000256" key="4">
    <source>
        <dbReference type="SAM" id="MobiDB-lite"/>
    </source>
</evidence>
<evidence type="ECO:0000305" key="5"/>
<comment type="function">
    <text evidence="1">Cell surface proteoglycan that bears heparan sulfate. May fulfill a function related to the motile behaviors of developing neurons (By similarity).</text>
</comment>
<comment type="subunit">
    <text evidence="2">Interacts (via heparan sulfate) with PTN; this interaction promotes neurite outgrowth through binding of PTN with chondroitin sulfate of proteoglycans, thereby releasing PTPRS of chondroitin sulfate proteoglycans (CSPGs) and leading to binding with heparan sulfate of GPC2. Interacts (heparan sulfate chain) with MDK; this interaction is inhibited by heparin followed by chondroitin sulfate E; this interaction induces GPC2 clustering through heparan sulfate chain; this interaction induces neuronal cell adhesion and neurite outgrowth (By similarity).</text>
</comment>
<comment type="subcellular location">
    <subcellularLocation>
        <location evidence="1">Cell membrane</location>
        <topology evidence="1">Lipid-anchor</topology>
        <topology evidence="1">GPI-anchor</topology>
        <orientation evidence="1">Extracellular side</orientation>
    </subcellularLocation>
</comment>
<comment type="subcellular location">
    <molecule>Secreted glypican-2</molecule>
    <subcellularLocation>
        <location evidence="1">Secreted</location>
        <location evidence="1">Extracellular space</location>
    </subcellularLocation>
</comment>
<comment type="similarity">
    <text evidence="5">Belongs to the glypican family.</text>
</comment>
<accession>Q8BKV1</accession>
<proteinExistence type="evidence at transcript level"/>
<name>GPC2_MOUSE</name>
<dbReference type="EMBL" id="AK049639">
    <property type="protein sequence ID" value="BAC33852.1"/>
    <property type="molecule type" value="mRNA"/>
</dbReference>
<dbReference type="EMBL" id="BC083180">
    <property type="protein sequence ID" value="AAH83180.1"/>
    <property type="molecule type" value="mRNA"/>
</dbReference>
<dbReference type="CCDS" id="CCDS19799.1"/>
<dbReference type="RefSeq" id="NP_766000.1">
    <property type="nucleotide sequence ID" value="NM_172412.3"/>
</dbReference>
<dbReference type="SMR" id="Q8BKV1"/>
<dbReference type="FunCoup" id="Q8BKV1">
    <property type="interactions" value="288"/>
</dbReference>
<dbReference type="STRING" id="10090.ENSMUSP00000124459"/>
<dbReference type="GlyCosmos" id="Q8BKV1">
    <property type="glycosylation" value="5 sites, No reported glycans"/>
</dbReference>
<dbReference type="GlyGen" id="Q8BKV1">
    <property type="glycosylation" value="5 sites"/>
</dbReference>
<dbReference type="iPTMnet" id="Q8BKV1"/>
<dbReference type="PhosphoSitePlus" id="Q8BKV1"/>
<dbReference type="PaxDb" id="10090-ENSMUSP00000124459"/>
<dbReference type="ProteomicsDB" id="271428"/>
<dbReference type="DNASU" id="71951"/>
<dbReference type="Ensembl" id="ENSMUST00000161827.8">
    <property type="protein sequence ID" value="ENSMUSP00000124459.2"/>
    <property type="gene ID" value="ENSMUSG00000029510.16"/>
</dbReference>
<dbReference type="GeneID" id="71951"/>
<dbReference type="KEGG" id="mmu:71951"/>
<dbReference type="UCSC" id="uc009afj.1">
    <property type="organism name" value="mouse"/>
</dbReference>
<dbReference type="AGR" id="MGI:1919201"/>
<dbReference type="CTD" id="221914"/>
<dbReference type="MGI" id="MGI:1919201">
    <property type="gene designation" value="Gpc2"/>
</dbReference>
<dbReference type="VEuPathDB" id="HostDB:ENSMUSG00000029510"/>
<dbReference type="eggNOG" id="KOG3821">
    <property type="taxonomic scope" value="Eukaryota"/>
</dbReference>
<dbReference type="GeneTree" id="ENSGT01050000244897"/>
<dbReference type="InParanoid" id="Q8BKV1"/>
<dbReference type="OMA" id="GFHTQPI"/>
<dbReference type="OrthoDB" id="10010764at2759"/>
<dbReference type="PhylomeDB" id="Q8BKV1"/>
<dbReference type="TreeFam" id="TF105317"/>
<dbReference type="Reactome" id="R-MMU-1971475">
    <property type="pathway name" value="A tetrasaccharide linker sequence is required for GAG synthesis"/>
</dbReference>
<dbReference type="Reactome" id="R-MMU-2022928">
    <property type="pathway name" value="HS-GAG biosynthesis"/>
</dbReference>
<dbReference type="Reactome" id="R-MMU-2024096">
    <property type="pathway name" value="HS-GAG degradation"/>
</dbReference>
<dbReference type="Reactome" id="R-MMU-975634">
    <property type="pathway name" value="Retinoid metabolism and transport"/>
</dbReference>
<dbReference type="BioGRID-ORCS" id="71951">
    <property type="hits" value="0 hits in 80 CRISPR screens"/>
</dbReference>
<dbReference type="ChiTaRS" id="Gpc2">
    <property type="organism name" value="mouse"/>
</dbReference>
<dbReference type="PRO" id="PR:Q8BKV1"/>
<dbReference type="Proteomes" id="UP000000589">
    <property type="component" value="Chromosome 5"/>
</dbReference>
<dbReference type="RNAct" id="Q8BKV1">
    <property type="molecule type" value="protein"/>
</dbReference>
<dbReference type="Bgee" id="ENSMUSG00000029510">
    <property type="expression patterns" value="Expressed in cortical plate and 94 other cell types or tissues"/>
</dbReference>
<dbReference type="ExpressionAtlas" id="Q8BKV1">
    <property type="expression patterns" value="baseline and differential"/>
</dbReference>
<dbReference type="GO" id="GO:0005783">
    <property type="term" value="C:endoplasmic reticulum"/>
    <property type="evidence" value="ECO:0007669"/>
    <property type="project" value="Ensembl"/>
</dbReference>
<dbReference type="GO" id="GO:0005576">
    <property type="term" value="C:extracellular region"/>
    <property type="evidence" value="ECO:0007669"/>
    <property type="project" value="UniProtKB-SubCell"/>
</dbReference>
<dbReference type="GO" id="GO:0005796">
    <property type="term" value="C:Golgi lumen"/>
    <property type="evidence" value="ECO:0000304"/>
    <property type="project" value="Reactome"/>
</dbReference>
<dbReference type="GO" id="GO:0005886">
    <property type="term" value="C:plasma membrane"/>
    <property type="evidence" value="ECO:0007669"/>
    <property type="project" value="UniProtKB-SubCell"/>
</dbReference>
<dbReference type="GO" id="GO:0098552">
    <property type="term" value="C:side of membrane"/>
    <property type="evidence" value="ECO:0007669"/>
    <property type="project" value="UniProtKB-KW"/>
</dbReference>
<dbReference type="GO" id="GO:0030182">
    <property type="term" value="P:neuron differentiation"/>
    <property type="evidence" value="ECO:0007669"/>
    <property type="project" value="Ensembl"/>
</dbReference>
<dbReference type="GO" id="GO:0010976">
    <property type="term" value="P:positive regulation of neuron projection development"/>
    <property type="evidence" value="ECO:0000250"/>
    <property type="project" value="UniProtKB"/>
</dbReference>
<dbReference type="GO" id="GO:0009966">
    <property type="term" value="P:regulation of signal transduction"/>
    <property type="evidence" value="ECO:0007669"/>
    <property type="project" value="InterPro"/>
</dbReference>
<dbReference type="GO" id="GO:0007224">
    <property type="term" value="P:smoothened signaling pathway"/>
    <property type="evidence" value="ECO:0007669"/>
    <property type="project" value="Ensembl"/>
</dbReference>
<dbReference type="InterPro" id="IPR001863">
    <property type="entry name" value="Glypican"/>
</dbReference>
<dbReference type="InterPro" id="IPR019803">
    <property type="entry name" value="Glypican_CS"/>
</dbReference>
<dbReference type="PANTHER" id="PTHR10822">
    <property type="entry name" value="GLYPICAN"/>
    <property type="match status" value="1"/>
</dbReference>
<dbReference type="PANTHER" id="PTHR10822:SF24">
    <property type="entry name" value="GLYPICAN-2"/>
    <property type="match status" value="1"/>
</dbReference>
<dbReference type="Pfam" id="PF01153">
    <property type="entry name" value="Glypican"/>
    <property type="match status" value="1"/>
</dbReference>
<dbReference type="PROSITE" id="PS01207">
    <property type="entry name" value="GLYPICAN"/>
    <property type="match status" value="1"/>
</dbReference>
<organism>
    <name type="scientific">Mus musculus</name>
    <name type="common">Mouse</name>
    <dbReference type="NCBI Taxonomy" id="10090"/>
    <lineage>
        <taxon>Eukaryota</taxon>
        <taxon>Metazoa</taxon>
        <taxon>Chordata</taxon>
        <taxon>Craniata</taxon>
        <taxon>Vertebrata</taxon>
        <taxon>Euteleostomi</taxon>
        <taxon>Mammalia</taxon>
        <taxon>Eutheria</taxon>
        <taxon>Euarchontoglires</taxon>
        <taxon>Glires</taxon>
        <taxon>Rodentia</taxon>
        <taxon>Myomorpha</taxon>
        <taxon>Muroidea</taxon>
        <taxon>Muridae</taxon>
        <taxon>Murinae</taxon>
        <taxon>Mus</taxon>
        <taxon>Mus</taxon>
    </lineage>
</organism>
<protein>
    <recommendedName>
        <fullName>Glypican-2</fullName>
    </recommendedName>
    <component>
        <recommendedName>
            <fullName>Secreted glypican-2</fullName>
        </recommendedName>
    </component>
</protein>
<sequence length="579" mass="63344">MSALRPLLLLLLHLCPGLGPGHGSEAKVVRSCAETRQVLGARGYSLNLIPPSLISGEHLQVCPQEYTCCSSETEQKLIRDAEVTFRGLVEDSGSFLIHTLAARHRKFNEFFREMLSISQHSLAQLFSHSYGRLYSQHAVIFNSLFSGLRDYYEKSGEGLDDTLADFWAQLLERAFPLLHPQYSFPPDFLLCLTRLTSTADGSLQPFGDSPRRLRLQISRALVAARALVQGLETGRNVVSEALKVPVLEGCRQALMRLIGCPLCRGVPSLMPCRGFCLNVAHGCLSSRGLEPEWGGYLDGLLLLAEKLQGPFSFELAAESIGVKISEGLMHLQENSVKVSAKVFQECGTPHPVQSRSRRAPAPREEASRSWRASAEEERPTTAAGTNLHRLVWELRERLSRVRGFWAGLPVTVCGDSRMAADLSQETAPCWTGVGRGRYMSPVVVGSLNEQLHNPELDTSSPDVPTRRRRLHLRAATARMKAAALGQDLDMHDADEDASGSGGGQQYADDWKAGAVPVVPPARPPRPPRPPRRDGLGVRGGSGSARYNQGRSRNLGSSVGLHTPLVLLLLPSALTLLVLR</sequence>